<sequence>MEQRFTHEDRFIMGLFPLLAVILISSNSSIIDIAMTVIIFGWIIYETLITVHFCKNYIETVESIMLGFVGFLGVLCLDKFPFGIILLIIYVIEGIYINVKTLKYARSC</sequence>
<keyword id="KW-1043">Host membrane</keyword>
<keyword id="KW-0472">Membrane</keyword>
<keyword id="KW-1185">Reference proteome</keyword>
<keyword id="KW-0812">Transmembrane</keyword>
<keyword id="KW-1133">Transmembrane helix</keyword>
<feature type="chain" id="PRO_0000384552" description="Putative transmembrane protein ORF108">
    <location>
        <begin position="1"/>
        <end position="108"/>
    </location>
</feature>
<feature type="transmembrane region" description="Helical" evidence="1">
    <location>
        <begin position="11"/>
        <end position="31"/>
    </location>
</feature>
<feature type="transmembrane region" description="Helical" evidence="1">
    <location>
        <begin position="33"/>
        <end position="53"/>
    </location>
</feature>
<feature type="transmembrane region" description="Helical" evidence="1">
    <location>
        <begin position="69"/>
        <end position="89"/>
    </location>
</feature>
<comment type="subcellular location">
    <subcellularLocation>
        <location evidence="2">Host membrane</location>
        <topology evidence="2">Multi-pass membrane protein</topology>
    </subcellularLocation>
</comment>
<organismHost>
    <name type="scientific">Acidianus hospitalis</name>
    <dbReference type="NCBI Taxonomy" id="563177"/>
</organismHost>
<organismHost>
    <name type="scientific">Acidianus infernus</name>
    <dbReference type="NCBI Taxonomy" id="12915"/>
</organismHost>
<gene>
    <name type="ORF">ORF108</name>
</gene>
<dbReference type="EMBL" id="AJ567472">
    <property type="protein sequence ID" value="CAD98968.1"/>
    <property type="molecule type" value="Genomic_DNA"/>
</dbReference>
<dbReference type="RefSeq" id="YP_003764.1">
    <property type="nucleotide sequence ID" value="NC_005830.1"/>
</dbReference>
<dbReference type="SMR" id="Q70LB2"/>
<dbReference type="KEGG" id="vg:2769183"/>
<dbReference type="Proteomes" id="UP000000514">
    <property type="component" value="Genome"/>
</dbReference>
<dbReference type="GO" id="GO:0033644">
    <property type="term" value="C:host cell membrane"/>
    <property type="evidence" value="ECO:0007669"/>
    <property type="project" value="UniProtKB-SubCell"/>
</dbReference>
<dbReference type="GO" id="GO:0016020">
    <property type="term" value="C:membrane"/>
    <property type="evidence" value="ECO:0007669"/>
    <property type="project" value="UniProtKB-KW"/>
</dbReference>
<name>Y108_AFV1Y</name>
<evidence type="ECO:0000255" key="1"/>
<evidence type="ECO:0000305" key="2"/>
<organism>
    <name type="scientific">Acidianus filamentous virus 1 (isolate United States/Yellowstone)</name>
    <name type="common">AFV-1</name>
    <dbReference type="NCBI Taxonomy" id="654909"/>
    <lineage>
        <taxon>Viruses</taxon>
        <taxon>Adnaviria</taxon>
        <taxon>Zilligvirae</taxon>
        <taxon>Taleaviricota</taxon>
        <taxon>Tokiviricetes</taxon>
        <taxon>Ligamenvirales</taxon>
        <taxon>Ungulaviridae</taxon>
        <taxon>Captovirus</taxon>
        <taxon>Acidianus filamentous virus 1</taxon>
    </lineage>
</organism>
<protein>
    <recommendedName>
        <fullName>Putative transmembrane protein ORF108</fullName>
    </recommendedName>
</protein>
<accession>Q70LB2</accession>
<proteinExistence type="predicted"/>
<reference key="1">
    <citation type="journal article" date="2003" name="Virology">
        <title>AFV1, a novel virus infecting hyperthermophilic archaea of the genus acidianus.</title>
        <authorList>
            <person name="Bettstetter M."/>
            <person name="Peng X."/>
            <person name="Garrett R.A."/>
            <person name="Prangishvili D."/>
        </authorList>
    </citation>
    <scope>NUCLEOTIDE SEQUENCE [GENOMIC DNA]</scope>
</reference>